<evidence type="ECO:0000255" key="1">
    <source>
        <dbReference type="HAMAP-Rule" id="MF_01953"/>
    </source>
</evidence>
<accession>Q0VKY1</accession>
<protein>
    <recommendedName>
        <fullName evidence="1">Urease subunit alpha</fullName>
        <ecNumber evidence="1">3.5.1.5</ecNumber>
    </recommendedName>
    <alternativeName>
        <fullName evidence="1">Urea amidohydrolase subunit alpha</fullName>
    </alternativeName>
</protein>
<sequence length="567" mass="60862">MATMSRQAYADMFGPTTGDRVRLADTDLWIQVEKDFTVYGDEVKFGGGKVIRDGMGQSQLPSAKVMDLVITNALILDYWGIVKADIGIKNGRIAAIGKAGNPDVQPNVDIIVGPGTDVIAGEGSIITAGGIDSHIHFICPQQIDEALASGVTTMIGGGTGPTTGTNATTVTPGPWNMARMLEAADCFPMNLGFLGKGNASLPESLSEQISAGAIGLKLHEDWGTTPASIDNCLSVAEETDTQVAIHTDTLNESGFVEDTIAAFKDRTIHTYHTEGAGGGHAPDIIRAAGLANVLPSSTNPTRPYTVNTADEHLDMLMVCHHLDPSIPEDVAFAESRIRRETIAAEDILHDLGAFSMIASDSQAMGRVGEVVMRTWQTAHKMKVQRGSLKGDPSEHDNFRAKRYVAKYTINPALAHGMAHEIGSVEVGKLADLVLWSPAFFGVKPNLIIKGGMIAMAKMGDPNASIPTPQPVHYRPMFGAYGKARQATTMTFISQAAMDAGIPEQLTLANRIGVVKGCRTVKKKDMLLNDWLPHLEVDPQTYEVRADGQLLTCEPAEVLPMAQRYFLF</sequence>
<gene>
    <name evidence="1" type="primary">ureC</name>
    <name type="ordered locus">ABO_2719</name>
</gene>
<keyword id="KW-0963">Cytoplasm</keyword>
<keyword id="KW-0378">Hydrolase</keyword>
<keyword id="KW-0479">Metal-binding</keyword>
<keyword id="KW-0533">Nickel</keyword>
<keyword id="KW-1185">Reference proteome</keyword>
<proteinExistence type="inferred from homology"/>
<reference key="1">
    <citation type="journal article" date="2006" name="Nat. Biotechnol.">
        <title>Genome sequence of the ubiquitous hydrocarbon-degrading marine bacterium Alcanivorax borkumensis.</title>
        <authorList>
            <person name="Schneiker S."/>
            <person name="Martins dos Santos V.A.P."/>
            <person name="Bartels D."/>
            <person name="Bekel T."/>
            <person name="Brecht M."/>
            <person name="Buhrmester J."/>
            <person name="Chernikova T.N."/>
            <person name="Denaro R."/>
            <person name="Ferrer M."/>
            <person name="Gertler C."/>
            <person name="Goesmann A."/>
            <person name="Golyshina O.V."/>
            <person name="Kaminski F."/>
            <person name="Khachane A.N."/>
            <person name="Lang S."/>
            <person name="Linke B."/>
            <person name="McHardy A.C."/>
            <person name="Meyer F."/>
            <person name="Nechitaylo T."/>
            <person name="Puehler A."/>
            <person name="Regenhardt D."/>
            <person name="Rupp O."/>
            <person name="Sabirova J.S."/>
            <person name="Selbitschka W."/>
            <person name="Yakimov M.M."/>
            <person name="Timmis K.N."/>
            <person name="Vorhoelter F.-J."/>
            <person name="Weidner S."/>
            <person name="Kaiser O."/>
            <person name="Golyshin P.N."/>
        </authorList>
    </citation>
    <scope>NUCLEOTIDE SEQUENCE [LARGE SCALE GENOMIC DNA]</scope>
    <source>
        <strain>ATCC 700651 / DSM 11573 / NCIMB 13689 / SK2</strain>
    </source>
</reference>
<organism>
    <name type="scientific">Alcanivorax borkumensis (strain ATCC 700651 / DSM 11573 / NCIMB 13689 / SK2)</name>
    <dbReference type="NCBI Taxonomy" id="393595"/>
    <lineage>
        <taxon>Bacteria</taxon>
        <taxon>Pseudomonadati</taxon>
        <taxon>Pseudomonadota</taxon>
        <taxon>Gammaproteobacteria</taxon>
        <taxon>Oceanospirillales</taxon>
        <taxon>Alcanivoracaceae</taxon>
        <taxon>Alcanivorax</taxon>
    </lineage>
</organism>
<dbReference type="EC" id="3.5.1.5" evidence="1"/>
<dbReference type="EMBL" id="AM286690">
    <property type="protein sequence ID" value="CAL18167.1"/>
    <property type="molecule type" value="Genomic_DNA"/>
</dbReference>
<dbReference type="SMR" id="Q0VKY1"/>
<dbReference type="STRING" id="393595.ABO_2719"/>
<dbReference type="KEGG" id="abo:ABO_2719"/>
<dbReference type="eggNOG" id="COG0804">
    <property type="taxonomic scope" value="Bacteria"/>
</dbReference>
<dbReference type="HOGENOM" id="CLU_000980_0_0_6"/>
<dbReference type="OrthoDB" id="9802793at2"/>
<dbReference type="UniPathway" id="UPA00258">
    <property type="reaction ID" value="UER00370"/>
</dbReference>
<dbReference type="Proteomes" id="UP000008871">
    <property type="component" value="Chromosome"/>
</dbReference>
<dbReference type="GO" id="GO:0005737">
    <property type="term" value="C:cytoplasm"/>
    <property type="evidence" value="ECO:0007669"/>
    <property type="project" value="UniProtKB-SubCell"/>
</dbReference>
<dbReference type="GO" id="GO:0016151">
    <property type="term" value="F:nickel cation binding"/>
    <property type="evidence" value="ECO:0007669"/>
    <property type="project" value="UniProtKB-UniRule"/>
</dbReference>
<dbReference type="GO" id="GO:0009039">
    <property type="term" value="F:urease activity"/>
    <property type="evidence" value="ECO:0007669"/>
    <property type="project" value="UniProtKB-UniRule"/>
</dbReference>
<dbReference type="GO" id="GO:0043419">
    <property type="term" value="P:urea catabolic process"/>
    <property type="evidence" value="ECO:0007669"/>
    <property type="project" value="UniProtKB-UniRule"/>
</dbReference>
<dbReference type="CDD" id="cd00375">
    <property type="entry name" value="Urease_alpha"/>
    <property type="match status" value="1"/>
</dbReference>
<dbReference type="Gene3D" id="3.20.20.140">
    <property type="entry name" value="Metal-dependent hydrolases"/>
    <property type="match status" value="1"/>
</dbReference>
<dbReference type="Gene3D" id="2.30.40.10">
    <property type="entry name" value="Urease, subunit C, domain 1"/>
    <property type="match status" value="1"/>
</dbReference>
<dbReference type="HAMAP" id="MF_01953">
    <property type="entry name" value="Urease_alpha"/>
    <property type="match status" value="1"/>
</dbReference>
<dbReference type="InterPro" id="IPR006680">
    <property type="entry name" value="Amidohydro-rel"/>
</dbReference>
<dbReference type="InterPro" id="IPR011059">
    <property type="entry name" value="Metal-dep_hydrolase_composite"/>
</dbReference>
<dbReference type="InterPro" id="IPR032466">
    <property type="entry name" value="Metal_Hydrolase"/>
</dbReference>
<dbReference type="InterPro" id="IPR011612">
    <property type="entry name" value="Urease_alpha_N_dom"/>
</dbReference>
<dbReference type="InterPro" id="IPR050112">
    <property type="entry name" value="Urease_alpha_subunit"/>
</dbReference>
<dbReference type="InterPro" id="IPR017950">
    <property type="entry name" value="Urease_AS"/>
</dbReference>
<dbReference type="InterPro" id="IPR005848">
    <property type="entry name" value="Urease_asu"/>
</dbReference>
<dbReference type="InterPro" id="IPR017951">
    <property type="entry name" value="Urease_asu_c"/>
</dbReference>
<dbReference type="InterPro" id="IPR029754">
    <property type="entry name" value="Urease_Ni-bd"/>
</dbReference>
<dbReference type="NCBIfam" id="NF009685">
    <property type="entry name" value="PRK13206.1"/>
    <property type="match status" value="1"/>
</dbReference>
<dbReference type="NCBIfam" id="NF009686">
    <property type="entry name" value="PRK13207.1"/>
    <property type="match status" value="1"/>
</dbReference>
<dbReference type="NCBIfam" id="TIGR01792">
    <property type="entry name" value="urease_alph"/>
    <property type="match status" value="1"/>
</dbReference>
<dbReference type="PANTHER" id="PTHR43440">
    <property type="entry name" value="UREASE"/>
    <property type="match status" value="1"/>
</dbReference>
<dbReference type="PANTHER" id="PTHR43440:SF1">
    <property type="entry name" value="UREASE"/>
    <property type="match status" value="1"/>
</dbReference>
<dbReference type="Pfam" id="PF01979">
    <property type="entry name" value="Amidohydro_1"/>
    <property type="match status" value="1"/>
</dbReference>
<dbReference type="Pfam" id="PF00449">
    <property type="entry name" value="Urease_alpha"/>
    <property type="match status" value="1"/>
</dbReference>
<dbReference type="PRINTS" id="PR01752">
    <property type="entry name" value="UREASE"/>
</dbReference>
<dbReference type="SUPFAM" id="SSF51338">
    <property type="entry name" value="Composite domain of metallo-dependent hydrolases"/>
    <property type="match status" value="2"/>
</dbReference>
<dbReference type="SUPFAM" id="SSF51556">
    <property type="entry name" value="Metallo-dependent hydrolases"/>
    <property type="match status" value="1"/>
</dbReference>
<dbReference type="PROSITE" id="PS01120">
    <property type="entry name" value="UREASE_1"/>
    <property type="match status" value="1"/>
</dbReference>
<dbReference type="PROSITE" id="PS00145">
    <property type="entry name" value="UREASE_2"/>
    <property type="match status" value="1"/>
</dbReference>
<dbReference type="PROSITE" id="PS51368">
    <property type="entry name" value="UREASE_3"/>
    <property type="match status" value="1"/>
</dbReference>
<comment type="catalytic activity">
    <reaction evidence="1">
        <text>urea + 2 H2O + H(+) = hydrogencarbonate + 2 NH4(+)</text>
        <dbReference type="Rhea" id="RHEA:20557"/>
        <dbReference type="ChEBI" id="CHEBI:15377"/>
        <dbReference type="ChEBI" id="CHEBI:15378"/>
        <dbReference type="ChEBI" id="CHEBI:16199"/>
        <dbReference type="ChEBI" id="CHEBI:17544"/>
        <dbReference type="ChEBI" id="CHEBI:28938"/>
        <dbReference type="EC" id="3.5.1.5"/>
    </reaction>
</comment>
<comment type="cofactor">
    <cofactor evidence="1">
        <name>Ni cation</name>
        <dbReference type="ChEBI" id="CHEBI:25516"/>
    </cofactor>
    <text evidence="1">Binds 2 nickel ions per subunit.</text>
</comment>
<comment type="pathway">
    <text evidence="1">Nitrogen metabolism; urea degradation; CO(2) and NH(3) from urea (urease route): step 1/1.</text>
</comment>
<comment type="subunit">
    <text evidence="1">Heterotrimer of UreA (gamma), UreB (beta) and UreC (alpha) subunits. Three heterotrimers associate to form the active enzyme.</text>
</comment>
<comment type="subcellular location">
    <subcellularLocation>
        <location evidence="1">Cytoplasm</location>
    </subcellularLocation>
</comment>
<comment type="PTM">
    <text evidence="1">Carboxylation allows a single lysine to coordinate two nickel ions.</text>
</comment>
<comment type="similarity">
    <text evidence="1">Belongs to the metallo-dependent hydrolases superfamily. Urease alpha subunit family.</text>
</comment>
<feature type="chain" id="PRO_1000070643" description="Urease subunit alpha">
    <location>
        <begin position="1"/>
        <end position="567"/>
    </location>
</feature>
<feature type="domain" description="Urease" evidence="1">
    <location>
        <begin position="129"/>
        <end position="567"/>
    </location>
</feature>
<feature type="active site" description="Proton donor" evidence="1">
    <location>
        <position position="320"/>
    </location>
</feature>
<feature type="binding site" evidence="1">
    <location>
        <position position="134"/>
    </location>
    <ligand>
        <name>Ni(2+)</name>
        <dbReference type="ChEBI" id="CHEBI:49786"/>
        <label>1</label>
    </ligand>
</feature>
<feature type="binding site" evidence="1">
    <location>
        <position position="136"/>
    </location>
    <ligand>
        <name>Ni(2+)</name>
        <dbReference type="ChEBI" id="CHEBI:49786"/>
        <label>1</label>
    </ligand>
</feature>
<feature type="binding site" description="via carbamate group" evidence="1">
    <location>
        <position position="217"/>
    </location>
    <ligand>
        <name>Ni(2+)</name>
        <dbReference type="ChEBI" id="CHEBI:49786"/>
        <label>1</label>
    </ligand>
</feature>
<feature type="binding site" description="via carbamate group" evidence="1">
    <location>
        <position position="217"/>
    </location>
    <ligand>
        <name>Ni(2+)</name>
        <dbReference type="ChEBI" id="CHEBI:49786"/>
        <label>2</label>
    </ligand>
</feature>
<feature type="binding site" evidence="1">
    <location>
        <position position="219"/>
    </location>
    <ligand>
        <name>substrate</name>
    </ligand>
</feature>
<feature type="binding site" evidence="1">
    <location>
        <position position="246"/>
    </location>
    <ligand>
        <name>Ni(2+)</name>
        <dbReference type="ChEBI" id="CHEBI:49786"/>
        <label>2</label>
    </ligand>
</feature>
<feature type="binding site" evidence="1">
    <location>
        <position position="272"/>
    </location>
    <ligand>
        <name>Ni(2+)</name>
        <dbReference type="ChEBI" id="CHEBI:49786"/>
        <label>2</label>
    </ligand>
</feature>
<feature type="binding site" evidence="1">
    <location>
        <position position="360"/>
    </location>
    <ligand>
        <name>Ni(2+)</name>
        <dbReference type="ChEBI" id="CHEBI:49786"/>
        <label>1</label>
    </ligand>
</feature>
<feature type="modified residue" description="N6-carboxylysine" evidence="1">
    <location>
        <position position="217"/>
    </location>
</feature>
<name>URE1_ALCBS</name>